<sequence>MKKINLKDKEIEKIINNEQQRQEEHIELIASENYVSKDVLEATGSILTNKYSEGYPGARYYDGCEFVDQIETLAIERLKKLFNVKFANVQPHSGSSANSAAIAALVKPGGKILGMSLDAGGHLTHGYKISFSGTFYDPYFYGVNDEGLLDYDVIEKLAEKIKPELIICGASNYSRTIDFEKFSKIAKKVGAFLLADIAHIAGLIIADLHPSPVGHADVITSTTHKTIRGARGGIIMSNDETLMKKIDRWVFPGYQGGPLVHVIAGKAVAFGEALTPQFKKYQQQIISNAKAFSEEFKKVGTKIISGQTDNHLFTIDVKSSFNISGKEASELMHSINITANKNSIPNDTLGPKISSGVRMGTPAMTTRGFKEVEFKKLARIIIELLANSTSSNLESLKLKLKNEVLELTKAFPTKDYYL</sequence>
<evidence type="ECO:0000255" key="1">
    <source>
        <dbReference type="HAMAP-Rule" id="MF_00051"/>
    </source>
</evidence>
<dbReference type="EC" id="2.1.2.1" evidence="1"/>
<dbReference type="EMBL" id="AE017308">
    <property type="protein sequence ID" value="AAT27957.1"/>
    <property type="molecule type" value="Genomic_DNA"/>
</dbReference>
<dbReference type="RefSeq" id="WP_011264991.1">
    <property type="nucleotide sequence ID" value="NC_006908.1"/>
</dbReference>
<dbReference type="SMR" id="Q6KHH3"/>
<dbReference type="STRING" id="267748.MMOB4710"/>
<dbReference type="KEGG" id="mmo:MMOB4710"/>
<dbReference type="eggNOG" id="COG0112">
    <property type="taxonomic scope" value="Bacteria"/>
</dbReference>
<dbReference type="HOGENOM" id="CLU_022477_2_1_14"/>
<dbReference type="OrthoDB" id="9803846at2"/>
<dbReference type="UniPathway" id="UPA00193"/>
<dbReference type="UniPathway" id="UPA00288">
    <property type="reaction ID" value="UER01023"/>
</dbReference>
<dbReference type="Proteomes" id="UP000009072">
    <property type="component" value="Chromosome"/>
</dbReference>
<dbReference type="GO" id="GO:0005829">
    <property type="term" value="C:cytosol"/>
    <property type="evidence" value="ECO:0007669"/>
    <property type="project" value="TreeGrafter"/>
</dbReference>
<dbReference type="GO" id="GO:0004372">
    <property type="term" value="F:glycine hydroxymethyltransferase activity"/>
    <property type="evidence" value="ECO:0007669"/>
    <property type="project" value="UniProtKB-UniRule"/>
</dbReference>
<dbReference type="GO" id="GO:0030170">
    <property type="term" value="F:pyridoxal phosphate binding"/>
    <property type="evidence" value="ECO:0007669"/>
    <property type="project" value="UniProtKB-UniRule"/>
</dbReference>
<dbReference type="GO" id="GO:0019264">
    <property type="term" value="P:glycine biosynthetic process from serine"/>
    <property type="evidence" value="ECO:0007669"/>
    <property type="project" value="UniProtKB-UniRule"/>
</dbReference>
<dbReference type="GO" id="GO:0035999">
    <property type="term" value="P:tetrahydrofolate interconversion"/>
    <property type="evidence" value="ECO:0007669"/>
    <property type="project" value="UniProtKB-UniRule"/>
</dbReference>
<dbReference type="CDD" id="cd00378">
    <property type="entry name" value="SHMT"/>
    <property type="match status" value="1"/>
</dbReference>
<dbReference type="FunFam" id="3.40.640.10:FF:000001">
    <property type="entry name" value="Serine hydroxymethyltransferase"/>
    <property type="match status" value="1"/>
</dbReference>
<dbReference type="Gene3D" id="3.90.1150.10">
    <property type="entry name" value="Aspartate Aminotransferase, domain 1"/>
    <property type="match status" value="1"/>
</dbReference>
<dbReference type="Gene3D" id="3.40.640.10">
    <property type="entry name" value="Type I PLP-dependent aspartate aminotransferase-like (Major domain)"/>
    <property type="match status" value="1"/>
</dbReference>
<dbReference type="HAMAP" id="MF_00051">
    <property type="entry name" value="SHMT"/>
    <property type="match status" value="1"/>
</dbReference>
<dbReference type="InterPro" id="IPR015424">
    <property type="entry name" value="PyrdxlP-dep_Trfase"/>
</dbReference>
<dbReference type="InterPro" id="IPR015421">
    <property type="entry name" value="PyrdxlP-dep_Trfase_major"/>
</dbReference>
<dbReference type="InterPro" id="IPR015422">
    <property type="entry name" value="PyrdxlP-dep_Trfase_small"/>
</dbReference>
<dbReference type="InterPro" id="IPR001085">
    <property type="entry name" value="Ser_HO-MeTrfase"/>
</dbReference>
<dbReference type="InterPro" id="IPR049943">
    <property type="entry name" value="Ser_HO-MeTrfase-like"/>
</dbReference>
<dbReference type="InterPro" id="IPR019798">
    <property type="entry name" value="Ser_HO-MeTrfase_PLP_BS"/>
</dbReference>
<dbReference type="InterPro" id="IPR039429">
    <property type="entry name" value="SHMT-like_dom"/>
</dbReference>
<dbReference type="NCBIfam" id="NF000586">
    <property type="entry name" value="PRK00011.1"/>
    <property type="match status" value="1"/>
</dbReference>
<dbReference type="PANTHER" id="PTHR11680">
    <property type="entry name" value="SERINE HYDROXYMETHYLTRANSFERASE"/>
    <property type="match status" value="1"/>
</dbReference>
<dbReference type="PANTHER" id="PTHR11680:SF35">
    <property type="entry name" value="SERINE HYDROXYMETHYLTRANSFERASE 1"/>
    <property type="match status" value="1"/>
</dbReference>
<dbReference type="Pfam" id="PF00464">
    <property type="entry name" value="SHMT"/>
    <property type="match status" value="1"/>
</dbReference>
<dbReference type="PIRSF" id="PIRSF000412">
    <property type="entry name" value="SHMT"/>
    <property type="match status" value="1"/>
</dbReference>
<dbReference type="SUPFAM" id="SSF53383">
    <property type="entry name" value="PLP-dependent transferases"/>
    <property type="match status" value="1"/>
</dbReference>
<dbReference type="PROSITE" id="PS00096">
    <property type="entry name" value="SHMT"/>
    <property type="match status" value="1"/>
</dbReference>
<accession>Q6KHH3</accession>
<protein>
    <recommendedName>
        <fullName evidence="1">Serine hydroxymethyltransferase</fullName>
        <shortName evidence="1">SHMT</shortName>
        <shortName evidence="1">Serine methylase</shortName>
        <ecNumber evidence="1">2.1.2.1</ecNumber>
    </recommendedName>
</protein>
<organism>
    <name type="scientific">Mycoplasma mobile (strain ATCC 43663 / 163K / NCTC 11711)</name>
    <name type="common">Mesomycoplasma mobile</name>
    <dbReference type="NCBI Taxonomy" id="267748"/>
    <lineage>
        <taxon>Bacteria</taxon>
        <taxon>Bacillati</taxon>
        <taxon>Mycoplasmatota</taxon>
        <taxon>Mycoplasmoidales</taxon>
        <taxon>Metamycoplasmataceae</taxon>
        <taxon>Mesomycoplasma</taxon>
    </lineage>
</organism>
<proteinExistence type="inferred from homology"/>
<name>GLYA_MYCM1</name>
<reference key="1">
    <citation type="journal article" date="2004" name="Genome Res.">
        <title>The complete genome and proteome of Mycoplasma mobile.</title>
        <authorList>
            <person name="Jaffe J.D."/>
            <person name="Stange-Thomann N."/>
            <person name="Smith C."/>
            <person name="DeCaprio D."/>
            <person name="Fisher S."/>
            <person name="Butler J."/>
            <person name="Calvo S."/>
            <person name="Elkins T."/>
            <person name="FitzGerald M.G."/>
            <person name="Hafez N."/>
            <person name="Kodira C.D."/>
            <person name="Major J."/>
            <person name="Wang S."/>
            <person name="Wilkinson J."/>
            <person name="Nicol R."/>
            <person name="Nusbaum C."/>
            <person name="Birren B."/>
            <person name="Berg H.C."/>
            <person name="Church G.M."/>
        </authorList>
    </citation>
    <scope>NUCLEOTIDE SEQUENCE [LARGE SCALE GENOMIC DNA]</scope>
    <source>
        <strain>ATCC 43663 / NCTC 11711 / 163 K</strain>
    </source>
</reference>
<gene>
    <name evidence="1" type="primary">glyA</name>
    <name type="ordered locus">MMOB4710</name>
</gene>
<feature type="chain" id="PRO_0000113612" description="Serine hydroxymethyltransferase">
    <location>
        <begin position="1"/>
        <end position="418"/>
    </location>
</feature>
<feature type="binding site" evidence="1">
    <location>
        <position position="117"/>
    </location>
    <ligand>
        <name>(6S)-5,6,7,8-tetrahydrofolate</name>
        <dbReference type="ChEBI" id="CHEBI:57453"/>
    </ligand>
</feature>
<feature type="binding site" evidence="1">
    <location>
        <begin position="121"/>
        <end position="123"/>
    </location>
    <ligand>
        <name>(6S)-5,6,7,8-tetrahydrofolate</name>
        <dbReference type="ChEBI" id="CHEBI:57453"/>
    </ligand>
</feature>
<feature type="site" description="Plays an important role in substrate specificity" evidence="1">
    <location>
        <position position="224"/>
    </location>
</feature>
<feature type="modified residue" description="N6-(pyridoxal phosphate)lysine" evidence="1">
    <location>
        <position position="225"/>
    </location>
</feature>
<comment type="function">
    <text evidence="1">Catalyzes the reversible interconversion of serine and glycine with tetrahydrofolate (THF) serving as the one-carbon carrier. This reaction serves as the major source of one-carbon groups required for the biosynthesis of purines, thymidylate, methionine, and other important biomolecules. Also exhibits THF-independent aldolase activity toward beta-hydroxyamino acids, producing glycine and aldehydes, via a retro-aldol mechanism.</text>
</comment>
<comment type="catalytic activity">
    <reaction evidence="1">
        <text>(6R)-5,10-methylene-5,6,7,8-tetrahydrofolate + glycine + H2O = (6S)-5,6,7,8-tetrahydrofolate + L-serine</text>
        <dbReference type="Rhea" id="RHEA:15481"/>
        <dbReference type="ChEBI" id="CHEBI:15377"/>
        <dbReference type="ChEBI" id="CHEBI:15636"/>
        <dbReference type="ChEBI" id="CHEBI:33384"/>
        <dbReference type="ChEBI" id="CHEBI:57305"/>
        <dbReference type="ChEBI" id="CHEBI:57453"/>
        <dbReference type="EC" id="2.1.2.1"/>
    </reaction>
</comment>
<comment type="cofactor">
    <cofactor evidence="1">
        <name>pyridoxal 5'-phosphate</name>
        <dbReference type="ChEBI" id="CHEBI:597326"/>
    </cofactor>
</comment>
<comment type="pathway">
    <text evidence="1">One-carbon metabolism; tetrahydrofolate interconversion.</text>
</comment>
<comment type="pathway">
    <text evidence="1">Amino-acid biosynthesis; glycine biosynthesis; glycine from L-serine: step 1/1.</text>
</comment>
<comment type="subunit">
    <text evidence="1">Homodimer.</text>
</comment>
<comment type="subcellular location">
    <subcellularLocation>
        <location evidence="1">Cytoplasm</location>
    </subcellularLocation>
</comment>
<comment type="similarity">
    <text evidence="1">Belongs to the SHMT family.</text>
</comment>
<keyword id="KW-0028">Amino-acid biosynthesis</keyword>
<keyword id="KW-0963">Cytoplasm</keyword>
<keyword id="KW-0554">One-carbon metabolism</keyword>
<keyword id="KW-0663">Pyridoxal phosphate</keyword>
<keyword id="KW-1185">Reference proteome</keyword>
<keyword id="KW-0808">Transferase</keyword>